<evidence type="ECO:0000255" key="1">
    <source>
        <dbReference type="HAMAP-Rule" id="MF_00447"/>
    </source>
</evidence>
<evidence type="ECO:0007829" key="2">
    <source>
        <dbReference type="PDB" id="8XLS"/>
    </source>
</evidence>
<protein>
    <recommendedName>
        <fullName evidence="1">Photosystem I reaction center subunit XI</fullName>
    </recommendedName>
    <alternativeName>
        <fullName evidence="1">PSI subunit V</fullName>
    </alternativeName>
    <alternativeName>
        <fullName evidence="1">PSI-L</fullName>
    </alternativeName>
</protein>
<keyword id="KW-0002">3D-structure</keyword>
<keyword id="KW-0150">Chloroplast</keyword>
<keyword id="KW-0472">Membrane</keyword>
<keyword id="KW-0602">Photosynthesis</keyword>
<keyword id="KW-0603">Photosystem I</keyword>
<keyword id="KW-0934">Plastid</keyword>
<keyword id="KW-0793">Thylakoid</keyword>
<keyword id="KW-0812">Transmembrane</keyword>
<keyword id="KW-1133">Transmembrane helix</keyword>
<dbReference type="EMBL" id="EF067921">
    <property type="protein sequence ID" value="ABK20780.1"/>
    <property type="molecule type" value="Genomic_DNA"/>
</dbReference>
<dbReference type="RefSeq" id="YP_874557.1">
    <property type="nucleotide sequence ID" value="NC_008589.1"/>
</dbReference>
<dbReference type="PDB" id="8XLS">
    <property type="method" value="EM"/>
    <property type="resolution" value="2.30 A"/>
    <property type="chains" value="L=1-148"/>
</dbReference>
<dbReference type="PDB" id="8ZEH">
    <property type="method" value="EM"/>
    <property type="resolution" value="2.78 A"/>
    <property type="chains" value="l=2-147"/>
</dbReference>
<dbReference type="PDB" id="8ZET">
    <property type="method" value="EM"/>
    <property type="resolution" value="3.20 A"/>
    <property type="chains" value="l=2-147"/>
</dbReference>
<dbReference type="PDBsum" id="8XLS"/>
<dbReference type="PDBsum" id="8ZEH"/>
<dbReference type="PDBsum" id="8ZET"/>
<dbReference type="EMDB" id="EMD-38457"/>
<dbReference type="EMDB" id="EMD-60032"/>
<dbReference type="EMDB" id="EMD-60044"/>
<dbReference type="SMR" id="A0T0U5"/>
<dbReference type="STRING" id="35128.A0T0U5"/>
<dbReference type="PaxDb" id="35128-Thapsdraft1342"/>
<dbReference type="GeneID" id="4524867"/>
<dbReference type="eggNOG" id="ENOG502QVFH">
    <property type="taxonomic scope" value="Eukaryota"/>
</dbReference>
<dbReference type="InParanoid" id="A0T0U5"/>
<dbReference type="OMA" id="GPFTICG"/>
<dbReference type="GO" id="GO:0009535">
    <property type="term" value="C:chloroplast thylakoid membrane"/>
    <property type="evidence" value="ECO:0007669"/>
    <property type="project" value="UniProtKB-SubCell"/>
</dbReference>
<dbReference type="GO" id="GO:0009538">
    <property type="term" value="C:photosystem I reaction center"/>
    <property type="evidence" value="ECO:0007669"/>
    <property type="project" value="InterPro"/>
</dbReference>
<dbReference type="GO" id="GO:0015979">
    <property type="term" value="P:photosynthesis"/>
    <property type="evidence" value="ECO:0007669"/>
    <property type="project" value="UniProtKB-UniRule"/>
</dbReference>
<dbReference type="FunFam" id="1.20.1240.10:FF:000002">
    <property type="entry name" value="Photosystem I reaction center subunit XI"/>
    <property type="match status" value="1"/>
</dbReference>
<dbReference type="Gene3D" id="1.20.1240.10">
    <property type="entry name" value="Photosystem I PsaL, reaction centre subunit XI"/>
    <property type="match status" value="1"/>
</dbReference>
<dbReference type="HAMAP" id="MF_00447">
    <property type="entry name" value="PSI_PsaL"/>
    <property type="match status" value="1"/>
</dbReference>
<dbReference type="InterPro" id="IPR003757">
    <property type="entry name" value="PSI_PsaL"/>
</dbReference>
<dbReference type="InterPro" id="IPR036592">
    <property type="entry name" value="PSI_PsaL_sf"/>
</dbReference>
<dbReference type="InterPro" id="IPR022980">
    <property type="entry name" value="PSI_suXI"/>
</dbReference>
<dbReference type="PANTHER" id="PTHR34803">
    <property type="entry name" value="PHOTOSYSTEM I REACTION CENTER SUBUNIT XI, CHLOROPLASTIC"/>
    <property type="match status" value="1"/>
</dbReference>
<dbReference type="PANTHER" id="PTHR34803:SF2">
    <property type="entry name" value="PHOTOSYSTEM I REACTION CENTER SUBUNIT XI, CHLOROPLASTIC"/>
    <property type="match status" value="1"/>
</dbReference>
<dbReference type="Pfam" id="PF02605">
    <property type="entry name" value="PsaL"/>
    <property type="match status" value="1"/>
</dbReference>
<dbReference type="SUPFAM" id="SSF81568">
    <property type="entry name" value="Photosystem I reaction center subunit XI, PsaL"/>
    <property type="match status" value="1"/>
</dbReference>
<gene>
    <name evidence="1" type="primary">psaL</name>
</gene>
<proteinExistence type="evidence at protein level"/>
<reference key="1">
    <citation type="journal article" date="2007" name="Mol. Genet. Genomics">
        <title>Chloroplast genomes of the diatoms Phaeodactylum tricornutum and Thalassiosira pseudonana: comparison with other plastid genomes of the red lineage.</title>
        <authorList>
            <person name="Oudot-Le Secq M.-P."/>
            <person name="Grimwood J."/>
            <person name="Shapiro H."/>
            <person name="Armbrust E.V."/>
            <person name="Bowler C."/>
            <person name="Green B.R."/>
        </authorList>
    </citation>
    <scope>NUCLEOTIDE SEQUENCE [LARGE SCALE GENOMIC DNA]</scope>
    <source>
        <strain>CCMP1335 / NEPCC58 / CCAP 1085/12</strain>
    </source>
</reference>
<sequence length="148" mass="15703">MANFIKPYNDDPFVGHLATPITSSSLTRALLKNLPAYRFGLTPLLRGLEIGLAHGYFLIGPFAQLGPLRNSDIGLLAGFLSTIGLILILTLGLTIYGAAAFGQEKSNGSELQTKKSWDQFKGGFFVGACGSAGFAFICLSSIPTFALN</sequence>
<name>PSAL_THAPS</name>
<organism>
    <name type="scientific">Thalassiosira pseudonana</name>
    <name type="common">Marine diatom</name>
    <name type="synonym">Cyclotella nana</name>
    <dbReference type="NCBI Taxonomy" id="35128"/>
    <lineage>
        <taxon>Eukaryota</taxon>
        <taxon>Sar</taxon>
        <taxon>Stramenopiles</taxon>
        <taxon>Ochrophyta</taxon>
        <taxon>Bacillariophyta</taxon>
        <taxon>Coscinodiscophyceae</taxon>
        <taxon>Thalassiosirophycidae</taxon>
        <taxon>Thalassiosirales</taxon>
        <taxon>Thalassiosiraceae</taxon>
        <taxon>Thalassiosira</taxon>
    </lineage>
</organism>
<geneLocation type="chloroplast"/>
<comment type="subcellular location">
    <subcellularLocation>
        <location evidence="1">Plastid</location>
        <location evidence="1">Chloroplast thylakoid membrane</location>
        <topology evidence="1">Multi-pass membrane protein</topology>
    </subcellularLocation>
</comment>
<comment type="similarity">
    <text evidence="1">Belongs to the PsaL family.</text>
</comment>
<accession>A0T0U5</accession>
<feature type="chain" id="PRO_0000277147" description="Photosystem I reaction center subunit XI">
    <location>
        <begin position="1"/>
        <end position="148"/>
    </location>
</feature>
<feature type="transmembrane region" description="Helical" evidence="1">
    <location>
        <begin position="48"/>
        <end position="68"/>
    </location>
</feature>
<feature type="transmembrane region" description="Helical" evidence="1">
    <location>
        <begin position="73"/>
        <end position="93"/>
    </location>
</feature>
<feature type="transmembrane region" description="Helical" evidence="1">
    <location>
        <begin position="122"/>
        <end position="142"/>
    </location>
</feature>
<feature type="helix" evidence="2">
    <location>
        <begin position="8"/>
        <end position="10"/>
    </location>
</feature>
<feature type="helix" evidence="2">
    <location>
        <begin position="20"/>
        <end position="23"/>
    </location>
</feature>
<feature type="helix" evidence="2">
    <location>
        <begin position="25"/>
        <end position="33"/>
    </location>
</feature>
<feature type="turn" evidence="2">
    <location>
        <begin position="35"/>
        <end position="37"/>
    </location>
</feature>
<feature type="helix" evidence="2">
    <location>
        <begin position="43"/>
        <end position="65"/>
    </location>
</feature>
<feature type="turn" evidence="2">
    <location>
        <begin position="67"/>
        <end position="70"/>
    </location>
</feature>
<feature type="helix" evidence="2">
    <location>
        <begin position="74"/>
        <end position="101"/>
    </location>
</feature>
<feature type="strand" evidence="2">
    <location>
        <begin position="110"/>
        <end position="113"/>
    </location>
</feature>
<feature type="helix" evidence="2">
    <location>
        <begin position="114"/>
        <end position="140"/>
    </location>
</feature>